<reference key="1">
    <citation type="journal article" date="1999" name="Curr. Genet.">
        <title>Organisation of the mitochondrial genome of Trichophyton rubrum III. DNA sequence analysis of the NADH dehydrogenase subunits 1, 2, 3, 4, 5 and the cytochrome b gene.</title>
        <authorList>
            <person name="de Bievre C."/>
            <person name="Dujon B."/>
        </authorList>
    </citation>
    <scope>NUCLEOTIDE SEQUENCE [GENOMIC DNA]</scope>
    <source>
        <strain>IP 1817.89</strain>
    </source>
</reference>
<reference key="2">
    <citation type="journal article" date="1995" name="Curr. Genet.">
        <title>Organisation of the mitochondrial genome of Trichophyton rubrum. DNA sequence analysis of the ND4 gene, the ATPase subunit-6 gene, the ribosomal RNA small-subunit gene, the ND6 gene, the COXIII gene, the ATPase subunit-8 gene and six tRNA genes that correspond respectively to the tyrosine, lysine, glutamine, asparagine, isoleucine and tryptophan isoacceptors.</title>
        <authorList>
            <person name="de Bievre C."/>
            <person name="Dujon B."/>
        </authorList>
    </citation>
    <scope>NUCLEOTIDE SEQUENCE [GENOMIC DNA] OF 478-494</scope>
    <source>
        <strain>IP 1817.89</strain>
    </source>
</reference>
<comment type="function">
    <text evidence="1">Core subunit of the mitochondrial membrane respiratory chain NADH dehydrogenase (Complex I) that is believed to belong to the minimal assembly required for catalysis. Complex I functions in the transfer of electrons from NADH to the respiratory chain. The immediate electron acceptor for the enzyme is believed to be ubiquinone (By similarity).</text>
</comment>
<comment type="catalytic activity">
    <reaction>
        <text>a ubiquinone + NADH + 5 H(+)(in) = a ubiquinol + NAD(+) + 4 H(+)(out)</text>
        <dbReference type="Rhea" id="RHEA:29091"/>
        <dbReference type="Rhea" id="RHEA-COMP:9565"/>
        <dbReference type="Rhea" id="RHEA-COMP:9566"/>
        <dbReference type="ChEBI" id="CHEBI:15378"/>
        <dbReference type="ChEBI" id="CHEBI:16389"/>
        <dbReference type="ChEBI" id="CHEBI:17976"/>
        <dbReference type="ChEBI" id="CHEBI:57540"/>
        <dbReference type="ChEBI" id="CHEBI:57945"/>
        <dbReference type="EC" id="7.1.1.2"/>
    </reaction>
</comment>
<comment type="subcellular location">
    <subcellularLocation>
        <location evidence="1">Mitochondrion membrane</location>
        <topology evidence="1">Multi-pass membrane protein</topology>
    </subcellularLocation>
</comment>
<comment type="similarity">
    <text evidence="3">Belongs to the complex I subunit 4 family.</text>
</comment>
<geneLocation type="mitochondrion"/>
<keyword id="KW-0249">Electron transport</keyword>
<keyword id="KW-0472">Membrane</keyword>
<keyword id="KW-0496">Mitochondrion</keyword>
<keyword id="KW-0520">NAD</keyword>
<keyword id="KW-0679">Respiratory chain</keyword>
<keyword id="KW-1278">Translocase</keyword>
<keyword id="KW-0812">Transmembrane</keyword>
<keyword id="KW-1133">Transmembrane helix</keyword>
<keyword id="KW-0813">Transport</keyword>
<keyword id="KW-0830">Ubiquinone</keyword>
<dbReference type="EC" id="7.1.1.2"/>
<dbReference type="EMBL" id="Y18476">
    <property type="protein sequence ID" value="CAA77190.1"/>
    <property type="molecule type" value="Genomic_DNA"/>
</dbReference>
<dbReference type="EMBL" id="X88896">
    <property type="protein sequence ID" value="CAA61354.1"/>
    <property type="molecule type" value="Genomic_DNA"/>
</dbReference>
<dbReference type="PIR" id="T14246">
    <property type="entry name" value="T14246"/>
</dbReference>
<dbReference type="SMR" id="Q36834"/>
<dbReference type="GO" id="GO:0031966">
    <property type="term" value="C:mitochondrial membrane"/>
    <property type="evidence" value="ECO:0007669"/>
    <property type="project" value="UniProtKB-SubCell"/>
</dbReference>
<dbReference type="GO" id="GO:0008137">
    <property type="term" value="F:NADH dehydrogenase (ubiquinone) activity"/>
    <property type="evidence" value="ECO:0007669"/>
    <property type="project" value="UniProtKB-EC"/>
</dbReference>
<dbReference type="GO" id="GO:0048039">
    <property type="term" value="F:ubiquinone binding"/>
    <property type="evidence" value="ECO:0007669"/>
    <property type="project" value="TreeGrafter"/>
</dbReference>
<dbReference type="GO" id="GO:0042773">
    <property type="term" value="P:ATP synthesis coupled electron transport"/>
    <property type="evidence" value="ECO:0007669"/>
    <property type="project" value="InterPro"/>
</dbReference>
<dbReference type="GO" id="GO:0015990">
    <property type="term" value="P:electron transport coupled proton transport"/>
    <property type="evidence" value="ECO:0007669"/>
    <property type="project" value="TreeGrafter"/>
</dbReference>
<dbReference type="InterPro" id="IPR010227">
    <property type="entry name" value="NADH_Q_OxRdtase_chainM/4"/>
</dbReference>
<dbReference type="InterPro" id="IPR003918">
    <property type="entry name" value="NADH_UbQ_OxRdtase"/>
</dbReference>
<dbReference type="InterPro" id="IPR001750">
    <property type="entry name" value="ND/Mrp_TM"/>
</dbReference>
<dbReference type="NCBIfam" id="TIGR01972">
    <property type="entry name" value="NDH_I_M"/>
    <property type="match status" value="1"/>
</dbReference>
<dbReference type="PANTHER" id="PTHR43507">
    <property type="entry name" value="NADH-UBIQUINONE OXIDOREDUCTASE CHAIN 4"/>
    <property type="match status" value="1"/>
</dbReference>
<dbReference type="PANTHER" id="PTHR43507:SF1">
    <property type="entry name" value="NADH-UBIQUINONE OXIDOREDUCTASE CHAIN 4"/>
    <property type="match status" value="1"/>
</dbReference>
<dbReference type="Pfam" id="PF00361">
    <property type="entry name" value="Proton_antipo_M"/>
    <property type="match status" value="1"/>
</dbReference>
<dbReference type="PRINTS" id="PR01437">
    <property type="entry name" value="NUOXDRDTASE4"/>
</dbReference>
<feature type="chain" id="PRO_0000118001" description="NADH-ubiquinone oxidoreductase chain 4">
    <location>
        <begin position="1"/>
        <end position="494"/>
    </location>
</feature>
<feature type="transmembrane region" description="Helical" evidence="2">
    <location>
        <begin position="6"/>
        <end position="26"/>
    </location>
</feature>
<feature type="transmembrane region" description="Helical" evidence="2">
    <location>
        <begin position="41"/>
        <end position="61"/>
    </location>
</feature>
<feature type="transmembrane region" description="Helical" evidence="2">
    <location>
        <begin position="87"/>
        <end position="107"/>
    </location>
</feature>
<feature type="transmembrane region" description="Helical" evidence="2">
    <location>
        <begin position="118"/>
        <end position="138"/>
    </location>
</feature>
<feature type="transmembrane region" description="Helical" evidence="2">
    <location>
        <begin position="141"/>
        <end position="161"/>
    </location>
</feature>
<feature type="transmembrane region" description="Helical" evidence="2">
    <location>
        <begin position="172"/>
        <end position="192"/>
    </location>
</feature>
<feature type="transmembrane region" description="Helical" evidence="2">
    <location>
        <begin position="207"/>
        <end position="227"/>
    </location>
</feature>
<feature type="transmembrane region" description="Helical" evidence="2">
    <location>
        <begin position="246"/>
        <end position="266"/>
    </location>
</feature>
<feature type="transmembrane region" description="Helical" evidence="2">
    <location>
        <begin position="280"/>
        <end position="300"/>
    </location>
</feature>
<feature type="transmembrane region" description="Helical" evidence="2">
    <location>
        <begin position="302"/>
        <end position="322"/>
    </location>
</feature>
<feature type="transmembrane region" description="Helical" evidence="2">
    <location>
        <begin position="336"/>
        <end position="356"/>
    </location>
</feature>
<feature type="transmembrane region" description="Helical" evidence="2">
    <location>
        <begin position="375"/>
        <end position="395"/>
    </location>
</feature>
<feature type="transmembrane region" description="Helical" evidence="2">
    <location>
        <begin position="415"/>
        <end position="435"/>
    </location>
</feature>
<feature type="transmembrane region" description="Helical" evidence="2">
    <location>
        <begin position="460"/>
        <end position="480"/>
    </location>
</feature>
<proteinExistence type="inferred from homology"/>
<name>NU4M_TRIRU</name>
<protein>
    <recommendedName>
        <fullName>NADH-ubiquinone oxidoreductase chain 4</fullName>
        <ecNumber>7.1.1.2</ecNumber>
    </recommendedName>
    <alternativeName>
        <fullName>NADH dehydrogenase subunit 4</fullName>
    </alternativeName>
</protein>
<gene>
    <name type="primary">ND4</name>
    <name type="synonym">NADH4</name>
</gene>
<organism>
    <name type="scientific">Trichophyton rubrum</name>
    <name type="common">Athlete's foot fungus</name>
    <name type="synonym">Epidermophyton rubrum</name>
    <dbReference type="NCBI Taxonomy" id="5551"/>
    <lineage>
        <taxon>Eukaryota</taxon>
        <taxon>Fungi</taxon>
        <taxon>Dikarya</taxon>
        <taxon>Ascomycota</taxon>
        <taxon>Pezizomycotina</taxon>
        <taxon>Eurotiomycetes</taxon>
        <taxon>Eurotiomycetidae</taxon>
        <taxon>Onygenales</taxon>
        <taxon>Arthrodermataceae</taxon>
        <taxon>Trichophyton</taxon>
    </lineage>
</organism>
<evidence type="ECO:0000250" key="1"/>
<evidence type="ECO:0000255" key="2"/>
<evidence type="ECO:0000305" key="3"/>
<accession>Q36834</accession>
<accession>Q9T9N0</accession>
<sequence>MFFQNIMIYLFSLLLIPLIVYFLLIYIRLRYSNNSNNQIKTIGLTTLIINLILSMIIFILFDFSSKQFQLQLEEIYKISYFDLYLGIDGISIYFLLLTTMIMPISLVANWNSIDSKNVLSFVIIILLLETLLLAVFLVLDILLFYIFFESILPPLFLLIGLFGSSDKVRASFYLFLYTLLGSLFMLLSIITMSSIMGATAFDALSKANFSYITQLFLFYGIFISFAVKTPTIFLNTWLLKAHVESPLAGSVILAGIVWKLRWYGIFRLIIPLLPKASMDYTYIVYVIGVITIFYTSFSTLRTIAIKELIAYSSVSHAAVYLLSAFSNTIQGIEGAIALGLAHGFVSSGLFICVGGILYDRSSTRLITYYRGMAQLMPIFCILFLYITLGNCGSPLTLNFIGEFMSLYGIFERISVLGVLASTSIVFSAAYTIFMFNRIAFGGQFSSYFFNYVKDLSKREFILLISLVVPAVFFGIYPAVILDGLHYSVSGLIYN</sequence>